<sequence>MAMRRFDPRQAQRGPQIRINQRIRVPEIRVIGDDGEMLGIMQTHEALRRAQEKGLDLVEVNPKADPPVCKILDFGKYKYDEKKKAREAKRKQSVVEIKEIKLRPKTDDHDLEFKTRAAHRFLGAGHKVKFTVRFRGREITHPEKAQEQLDWIVQHCEEIANVEVRPMMEQRTMTLMMAPKPAILQKVAQARAAAEKARQKAIQEGRAAPAQDDTEDEEIEKLERELEEQDDEDDDEAEATE</sequence>
<feature type="chain" id="PRO_1000075276" description="Translation initiation factor IF-3">
    <location>
        <begin position="1"/>
        <end position="241"/>
    </location>
</feature>
<feature type="region of interest" description="Disordered" evidence="2">
    <location>
        <begin position="193"/>
        <end position="241"/>
    </location>
</feature>
<feature type="compositionally biased region" description="Basic and acidic residues" evidence="2">
    <location>
        <begin position="193"/>
        <end position="203"/>
    </location>
</feature>
<feature type="compositionally biased region" description="Acidic residues" evidence="2">
    <location>
        <begin position="212"/>
        <end position="241"/>
    </location>
</feature>
<evidence type="ECO:0000255" key="1">
    <source>
        <dbReference type="HAMAP-Rule" id="MF_00080"/>
    </source>
</evidence>
<evidence type="ECO:0000256" key="2">
    <source>
        <dbReference type="SAM" id="MobiDB-lite"/>
    </source>
</evidence>
<gene>
    <name evidence="1" type="primary">infC</name>
    <name type="ordered locus">sce4486</name>
</gene>
<name>IF3_SORC5</name>
<protein>
    <recommendedName>
        <fullName evidence="1">Translation initiation factor IF-3</fullName>
    </recommendedName>
</protein>
<dbReference type="EMBL" id="AM746676">
    <property type="protein sequence ID" value="CAN94649.1"/>
    <property type="molecule type" value="Genomic_DNA"/>
</dbReference>
<dbReference type="SMR" id="A9F8E5"/>
<dbReference type="STRING" id="448385.sce4486"/>
<dbReference type="KEGG" id="scl:sce4486"/>
<dbReference type="eggNOG" id="COG0290">
    <property type="taxonomic scope" value="Bacteria"/>
</dbReference>
<dbReference type="HOGENOM" id="CLU_054919_3_1_7"/>
<dbReference type="OrthoDB" id="9806014at2"/>
<dbReference type="BioCyc" id="SCEL448385:SCE_RS23020-MONOMER"/>
<dbReference type="Proteomes" id="UP000002139">
    <property type="component" value="Chromosome"/>
</dbReference>
<dbReference type="GO" id="GO:0005829">
    <property type="term" value="C:cytosol"/>
    <property type="evidence" value="ECO:0007669"/>
    <property type="project" value="TreeGrafter"/>
</dbReference>
<dbReference type="GO" id="GO:0016020">
    <property type="term" value="C:membrane"/>
    <property type="evidence" value="ECO:0007669"/>
    <property type="project" value="TreeGrafter"/>
</dbReference>
<dbReference type="GO" id="GO:0043022">
    <property type="term" value="F:ribosome binding"/>
    <property type="evidence" value="ECO:0007669"/>
    <property type="project" value="TreeGrafter"/>
</dbReference>
<dbReference type="GO" id="GO:0003743">
    <property type="term" value="F:translation initiation factor activity"/>
    <property type="evidence" value="ECO:0007669"/>
    <property type="project" value="UniProtKB-UniRule"/>
</dbReference>
<dbReference type="GO" id="GO:0032790">
    <property type="term" value="P:ribosome disassembly"/>
    <property type="evidence" value="ECO:0007669"/>
    <property type="project" value="TreeGrafter"/>
</dbReference>
<dbReference type="FunFam" id="3.10.20.80:FF:000001">
    <property type="entry name" value="Translation initiation factor IF-3"/>
    <property type="match status" value="1"/>
</dbReference>
<dbReference type="FunFam" id="3.30.110.10:FF:000001">
    <property type="entry name" value="Translation initiation factor IF-3"/>
    <property type="match status" value="1"/>
</dbReference>
<dbReference type="Gene3D" id="3.30.110.10">
    <property type="entry name" value="Translation initiation factor 3 (IF-3), C-terminal domain"/>
    <property type="match status" value="1"/>
</dbReference>
<dbReference type="Gene3D" id="3.10.20.80">
    <property type="entry name" value="Translation initiation factor 3 (IF-3), N-terminal domain"/>
    <property type="match status" value="1"/>
</dbReference>
<dbReference type="HAMAP" id="MF_00080">
    <property type="entry name" value="IF_3"/>
    <property type="match status" value="1"/>
</dbReference>
<dbReference type="InterPro" id="IPR036788">
    <property type="entry name" value="T_IF-3_C_sf"/>
</dbReference>
<dbReference type="InterPro" id="IPR036787">
    <property type="entry name" value="T_IF-3_N_sf"/>
</dbReference>
<dbReference type="InterPro" id="IPR019813">
    <property type="entry name" value="Translation_initiation_fac3_CS"/>
</dbReference>
<dbReference type="InterPro" id="IPR001288">
    <property type="entry name" value="Translation_initiation_fac_3"/>
</dbReference>
<dbReference type="InterPro" id="IPR019815">
    <property type="entry name" value="Translation_initiation_fac_3_C"/>
</dbReference>
<dbReference type="InterPro" id="IPR019814">
    <property type="entry name" value="Translation_initiation_fac_3_N"/>
</dbReference>
<dbReference type="NCBIfam" id="TIGR00168">
    <property type="entry name" value="infC"/>
    <property type="match status" value="1"/>
</dbReference>
<dbReference type="PANTHER" id="PTHR10938">
    <property type="entry name" value="TRANSLATION INITIATION FACTOR IF-3"/>
    <property type="match status" value="1"/>
</dbReference>
<dbReference type="PANTHER" id="PTHR10938:SF0">
    <property type="entry name" value="TRANSLATION INITIATION FACTOR IF-3, MITOCHONDRIAL"/>
    <property type="match status" value="1"/>
</dbReference>
<dbReference type="Pfam" id="PF00707">
    <property type="entry name" value="IF3_C"/>
    <property type="match status" value="1"/>
</dbReference>
<dbReference type="Pfam" id="PF05198">
    <property type="entry name" value="IF3_N"/>
    <property type="match status" value="1"/>
</dbReference>
<dbReference type="SUPFAM" id="SSF55200">
    <property type="entry name" value="Translation initiation factor IF3, C-terminal domain"/>
    <property type="match status" value="1"/>
</dbReference>
<dbReference type="SUPFAM" id="SSF54364">
    <property type="entry name" value="Translation initiation factor IF3, N-terminal domain"/>
    <property type="match status" value="1"/>
</dbReference>
<dbReference type="PROSITE" id="PS00938">
    <property type="entry name" value="IF3"/>
    <property type="match status" value="1"/>
</dbReference>
<organism>
    <name type="scientific">Sorangium cellulosum (strain So ce56)</name>
    <name type="common">Polyangium cellulosum (strain So ce56)</name>
    <dbReference type="NCBI Taxonomy" id="448385"/>
    <lineage>
        <taxon>Bacteria</taxon>
        <taxon>Pseudomonadati</taxon>
        <taxon>Myxococcota</taxon>
        <taxon>Polyangia</taxon>
        <taxon>Polyangiales</taxon>
        <taxon>Polyangiaceae</taxon>
        <taxon>Sorangium</taxon>
    </lineage>
</organism>
<keyword id="KW-0963">Cytoplasm</keyword>
<keyword id="KW-0396">Initiation factor</keyword>
<keyword id="KW-0648">Protein biosynthesis</keyword>
<keyword id="KW-1185">Reference proteome</keyword>
<proteinExistence type="inferred from homology"/>
<accession>A9F8E5</accession>
<comment type="function">
    <text evidence="1">IF-3 binds to the 30S ribosomal subunit and shifts the equilibrium between 70S ribosomes and their 50S and 30S subunits in favor of the free subunits, thus enhancing the availability of 30S subunits on which protein synthesis initiation begins.</text>
</comment>
<comment type="subunit">
    <text evidence="1">Monomer.</text>
</comment>
<comment type="subcellular location">
    <subcellularLocation>
        <location evidence="1">Cytoplasm</location>
    </subcellularLocation>
</comment>
<comment type="similarity">
    <text evidence="1">Belongs to the IF-3 family.</text>
</comment>
<reference key="1">
    <citation type="journal article" date="2007" name="Nat. Biotechnol.">
        <title>Complete genome sequence of the myxobacterium Sorangium cellulosum.</title>
        <authorList>
            <person name="Schneiker S."/>
            <person name="Perlova O."/>
            <person name="Kaiser O."/>
            <person name="Gerth K."/>
            <person name="Alici A."/>
            <person name="Altmeyer M.O."/>
            <person name="Bartels D."/>
            <person name="Bekel T."/>
            <person name="Beyer S."/>
            <person name="Bode E."/>
            <person name="Bode H.B."/>
            <person name="Bolten C.J."/>
            <person name="Choudhuri J.V."/>
            <person name="Doss S."/>
            <person name="Elnakady Y.A."/>
            <person name="Frank B."/>
            <person name="Gaigalat L."/>
            <person name="Goesmann A."/>
            <person name="Groeger C."/>
            <person name="Gross F."/>
            <person name="Jelsbak L."/>
            <person name="Jelsbak L."/>
            <person name="Kalinowski J."/>
            <person name="Kegler C."/>
            <person name="Knauber T."/>
            <person name="Konietzny S."/>
            <person name="Kopp M."/>
            <person name="Krause L."/>
            <person name="Krug D."/>
            <person name="Linke B."/>
            <person name="Mahmud T."/>
            <person name="Martinez-Arias R."/>
            <person name="McHardy A.C."/>
            <person name="Merai M."/>
            <person name="Meyer F."/>
            <person name="Mormann S."/>
            <person name="Munoz-Dorado J."/>
            <person name="Perez J."/>
            <person name="Pradella S."/>
            <person name="Rachid S."/>
            <person name="Raddatz G."/>
            <person name="Rosenau F."/>
            <person name="Rueckert C."/>
            <person name="Sasse F."/>
            <person name="Scharfe M."/>
            <person name="Schuster S.C."/>
            <person name="Suen G."/>
            <person name="Treuner-Lange A."/>
            <person name="Velicer G.J."/>
            <person name="Vorholter F.-J."/>
            <person name="Weissman K.J."/>
            <person name="Welch R.D."/>
            <person name="Wenzel S.C."/>
            <person name="Whitworth D.E."/>
            <person name="Wilhelm S."/>
            <person name="Wittmann C."/>
            <person name="Bloecker H."/>
            <person name="Puehler A."/>
            <person name="Mueller R."/>
        </authorList>
    </citation>
    <scope>NUCLEOTIDE SEQUENCE [LARGE SCALE GENOMIC DNA]</scope>
    <source>
        <strain>So ce56</strain>
    </source>
</reference>